<gene>
    <name evidence="1" type="primary">castor2</name>
    <name type="synonym">gatsl1</name>
    <name evidence="1" type="synonym">gatsl2</name>
    <name evidence="3" type="ORF">TNeu115k14.1</name>
</gene>
<protein>
    <recommendedName>
        <fullName evidence="1">Cytosolic arginine sensor for mTORC1 subunit 2</fullName>
    </recommendedName>
    <alternativeName>
        <fullName evidence="2">GATS-like protein 2</fullName>
    </alternativeName>
</protein>
<reference key="1">
    <citation type="submission" date="2004-09" db="EMBL/GenBank/DDBJ databases">
        <authorList>
            <consortium name="Sanger Xenopus tropicalis EST/cDNA project"/>
        </authorList>
    </citation>
    <scope>NUCLEOTIDE SEQUENCE [LARGE SCALE MRNA]</scope>
    <source>
        <tissue>Neurula</tissue>
    </source>
</reference>
<reference key="2">
    <citation type="submission" date="2004-09" db="EMBL/GenBank/DDBJ databases">
        <authorList>
            <consortium name="NIH - Xenopus Gene Collection (XGC) project"/>
        </authorList>
    </citation>
    <scope>NUCLEOTIDE SEQUENCE [LARGE SCALE MRNA]</scope>
    <source>
        <tissue>Embryo</tissue>
    </source>
</reference>
<dbReference type="EMBL" id="CR760105">
    <property type="protein sequence ID" value="CAJ82710.1"/>
    <property type="molecule type" value="mRNA"/>
</dbReference>
<dbReference type="EMBL" id="BC082733">
    <property type="protein sequence ID" value="AAH82733.1"/>
    <property type="molecule type" value="mRNA"/>
</dbReference>
<dbReference type="RefSeq" id="NP_001011019.1">
    <property type="nucleotide sequence ID" value="NM_001011019.1"/>
</dbReference>
<dbReference type="SMR" id="Q63ZZ8"/>
<dbReference type="FunCoup" id="Q63ZZ8">
    <property type="interactions" value="509"/>
</dbReference>
<dbReference type="STRING" id="8364.ENSXETP00000032441"/>
<dbReference type="PaxDb" id="8364-ENSXETP00000060383"/>
<dbReference type="GeneID" id="496428"/>
<dbReference type="KEGG" id="xtr:496428"/>
<dbReference type="AGR" id="Xenbase:XB-GENE-949506"/>
<dbReference type="CTD" id="729438"/>
<dbReference type="Xenbase" id="XB-GENE-949506">
    <property type="gene designation" value="castor2"/>
</dbReference>
<dbReference type="eggNOG" id="ENOG502QV83">
    <property type="taxonomic scope" value="Eukaryota"/>
</dbReference>
<dbReference type="HOGENOM" id="CLU_057799_0_0_1"/>
<dbReference type="InParanoid" id="Q63ZZ8"/>
<dbReference type="OMA" id="NEECGHI"/>
<dbReference type="OrthoDB" id="58529at2759"/>
<dbReference type="PhylomeDB" id="Q63ZZ8"/>
<dbReference type="Reactome" id="R-XTR-9639288">
    <property type="pathway name" value="Amino acids regulate mTORC1"/>
</dbReference>
<dbReference type="Proteomes" id="UP000008143">
    <property type="component" value="Chromosome 2"/>
</dbReference>
<dbReference type="Bgee" id="ENSXETG00000018449">
    <property type="expression patterns" value="Expressed in testis and 13 other cell types or tissues"/>
</dbReference>
<dbReference type="GO" id="GO:0005829">
    <property type="term" value="C:cytosol"/>
    <property type="evidence" value="ECO:0000250"/>
    <property type="project" value="UniProtKB"/>
</dbReference>
<dbReference type="GO" id="GO:1904262">
    <property type="term" value="P:negative regulation of TORC1 signaling"/>
    <property type="evidence" value="ECO:0000250"/>
    <property type="project" value="UniProtKB"/>
</dbReference>
<dbReference type="FunFam" id="3.30.2130.10:FF:000003">
    <property type="entry name" value="Cytosolic arginine sensor for mTORC1 subunit 1"/>
    <property type="match status" value="1"/>
</dbReference>
<dbReference type="FunFam" id="3.30.2130.10:FF:000004">
    <property type="entry name" value="Cytosolic arginine sensor for mTORC1 subunit 1"/>
    <property type="match status" value="1"/>
</dbReference>
<dbReference type="Gene3D" id="3.30.2130.10">
    <property type="entry name" value="VC0802-like"/>
    <property type="match status" value="2"/>
</dbReference>
<dbReference type="InterPro" id="IPR045865">
    <property type="entry name" value="ACT-like_dom_sf"/>
</dbReference>
<dbReference type="InterPro" id="IPR049479">
    <property type="entry name" value="CASTOR1_ACT-like"/>
</dbReference>
<dbReference type="InterPro" id="IPR040778">
    <property type="entry name" value="CASTOR1_N"/>
</dbReference>
<dbReference type="InterPro" id="IPR027795">
    <property type="entry name" value="CASTOR_ACT_dom"/>
</dbReference>
<dbReference type="InterPro" id="IPR026249">
    <property type="entry name" value="CASTOR_fam"/>
</dbReference>
<dbReference type="InterPro" id="IPR051719">
    <property type="entry name" value="CASTOR_mTORC1"/>
</dbReference>
<dbReference type="PANTHER" id="PTHR31131">
    <property type="entry name" value="CHROMOSOME 1, WHOLE GENOME SHOTGUN SEQUENCE"/>
    <property type="match status" value="1"/>
</dbReference>
<dbReference type="PANTHER" id="PTHR31131:SF2">
    <property type="entry name" value="CYTOSOLIC ARGININE SENSOR FOR MTORC1 SUBUNIT 2"/>
    <property type="match status" value="1"/>
</dbReference>
<dbReference type="Pfam" id="PF13840">
    <property type="entry name" value="ACT_7"/>
    <property type="match status" value="2"/>
</dbReference>
<dbReference type="Pfam" id="PF21389">
    <property type="entry name" value="CASTOR1_ACT-like"/>
    <property type="match status" value="1"/>
</dbReference>
<dbReference type="Pfam" id="PF18700">
    <property type="entry name" value="Castor1_N"/>
    <property type="match status" value="1"/>
</dbReference>
<dbReference type="PRINTS" id="PR02078">
    <property type="entry name" value="GATSLIKEFMLY"/>
</dbReference>
<dbReference type="SUPFAM" id="SSF55021">
    <property type="entry name" value="ACT-like"/>
    <property type="match status" value="2"/>
</dbReference>
<sequence length="329" mass="36114">MELHILEHRLKVASIAKENIQLFTYGLIKLAFLSSKTRCKFFSLTETPEDYTIIVDEEGFLELPSSEHLSVADATWLALNVVSGGGSSSSSQPIGVTKIAKSVIAPLADQNISVFMLSTYQTDFILVRERDLPFVMHTLAAEFTILQVVNGETVAADNLGVTNGFVKPKLVQRPVIHPLSSPSNMFCVTSLDPYTLPTVTTLLMDVMFYSNGVKDSVVGSEEPGHIRFFSFSLIEGYISLVMDVQTQQRFPSNLLFTSASGELWKMVRIGGQPLGFDECGIVAQISEPLAAADIPAYYISTFKFDHALVPEENINGVINALQVSQAEKH</sequence>
<comment type="function">
    <text evidence="1">Functions as a negative regulator of the TORC1 signaling pathway.</text>
</comment>
<comment type="subunit">
    <text evidence="1">May form homodimers and heterodimers.</text>
</comment>
<comment type="subcellular location">
    <subcellularLocation>
        <location evidence="1">Cytoplasm</location>
        <location evidence="1">Cytosol</location>
    </subcellularLocation>
</comment>
<comment type="similarity">
    <text evidence="2">Belongs to the GATS family.</text>
</comment>
<name>CAST2_XENTR</name>
<proteinExistence type="evidence at transcript level"/>
<keyword id="KW-0963">Cytoplasm</keyword>
<keyword id="KW-1185">Reference proteome</keyword>
<feature type="chain" id="PRO_0000325895" description="Cytosolic arginine sensor for mTORC1 subunit 2">
    <location>
        <begin position="1"/>
        <end position="329"/>
    </location>
</feature>
<feature type="domain" description="ACT 1">
    <location>
        <begin position="72"/>
        <end position="139"/>
    </location>
</feature>
<feature type="domain" description="ACT 2">
    <location>
        <begin position="262"/>
        <end position="322"/>
    </location>
</feature>
<evidence type="ECO:0000250" key="1">
    <source>
        <dbReference type="UniProtKB" id="A6NHX0"/>
    </source>
</evidence>
<evidence type="ECO:0000305" key="2"/>
<evidence type="ECO:0000312" key="3">
    <source>
        <dbReference type="EMBL" id="CAJ82710.1"/>
    </source>
</evidence>
<organism>
    <name type="scientific">Xenopus tropicalis</name>
    <name type="common">Western clawed frog</name>
    <name type="synonym">Silurana tropicalis</name>
    <dbReference type="NCBI Taxonomy" id="8364"/>
    <lineage>
        <taxon>Eukaryota</taxon>
        <taxon>Metazoa</taxon>
        <taxon>Chordata</taxon>
        <taxon>Craniata</taxon>
        <taxon>Vertebrata</taxon>
        <taxon>Euteleostomi</taxon>
        <taxon>Amphibia</taxon>
        <taxon>Batrachia</taxon>
        <taxon>Anura</taxon>
        <taxon>Pipoidea</taxon>
        <taxon>Pipidae</taxon>
        <taxon>Xenopodinae</taxon>
        <taxon>Xenopus</taxon>
        <taxon>Silurana</taxon>
    </lineage>
</organism>
<accession>Q63ZZ8</accession>